<proteinExistence type="inferred from homology"/>
<comment type="function">
    <text evidence="1">Part of the twin-arginine translocation (Tat) system that transports large folded proteins containing a characteristic twin-arginine motif in their signal peptide across membranes. Together with TatC, TatB is part of a receptor directly interacting with Tat signal peptides. TatB may form an oligomeric binding site that transiently accommodates folded Tat precursor proteins before their translocation.</text>
</comment>
<comment type="subunit">
    <text evidence="1">The Tat system comprises two distinct complexes: a TatABC complex, containing multiple copies of TatA, TatB and TatC subunits, and a separate TatA complex, containing only TatA subunits. Substrates initially bind to the TatABC complex, which probably triggers association of the separate TatA complex to form the active translocon.</text>
</comment>
<comment type="subcellular location">
    <subcellularLocation>
        <location evidence="1">Cell inner membrane</location>
        <topology evidence="1">Single-pass membrane protein</topology>
    </subcellularLocation>
</comment>
<comment type="similarity">
    <text evidence="1">Belongs to the TatB family.</text>
</comment>
<sequence length="136" mass="15388">MFDIGFWELVLISVIGLVVLGPERLPHAIRSVMHWITTAKNMANSVKTEVTQELKLHEINENMIKASKQGLSDLDPELQKSIDEMKETAEQLSRPYKKDIDDIKTSLDKNPSGTTQQENSILDSSKTTPPRQDKNE</sequence>
<evidence type="ECO:0000255" key="1">
    <source>
        <dbReference type="HAMAP-Rule" id="MF_00237"/>
    </source>
</evidence>
<evidence type="ECO:0000256" key="2">
    <source>
        <dbReference type="SAM" id="MobiDB-lite"/>
    </source>
</evidence>
<name>TATB_PSYIN</name>
<keyword id="KW-0997">Cell inner membrane</keyword>
<keyword id="KW-1003">Cell membrane</keyword>
<keyword id="KW-0472">Membrane</keyword>
<keyword id="KW-0653">Protein transport</keyword>
<keyword id="KW-1185">Reference proteome</keyword>
<keyword id="KW-0811">Translocation</keyword>
<keyword id="KW-0812">Transmembrane</keyword>
<keyword id="KW-1133">Transmembrane helix</keyword>
<keyword id="KW-0813">Transport</keyword>
<organism>
    <name type="scientific">Psychromonas ingrahamii (strain DSM 17664 / CCUG 51855 / 37)</name>
    <dbReference type="NCBI Taxonomy" id="357804"/>
    <lineage>
        <taxon>Bacteria</taxon>
        <taxon>Pseudomonadati</taxon>
        <taxon>Pseudomonadota</taxon>
        <taxon>Gammaproteobacteria</taxon>
        <taxon>Alteromonadales</taxon>
        <taxon>Psychromonadaceae</taxon>
        <taxon>Psychromonas</taxon>
    </lineage>
</organism>
<dbReference type="EMBL" id="CP000510">
    <property type="protein sequence ID" value="ABM02185.1"/>
    <property type="molecule type" value="Genomic_DNA"/>
</dbReference>
<dbReference type="RefSeq" id="WP_011768744.1">
    <property type="nucleotide sequence ID" value="NC_008709.1"/>
</dbReference>
<dbReference type="SMR" id="A1SRS0"/>
<dbReference type="STRING" id="357804.Ping_0319"/>
<dbReference type="KEGG" id="pin:Ping_0319"/>
<dbReference type="eggNOG" id="COG1826">
    <property type="taxonomic scope" value="Bacteria"/>
</dbReference>
<dbReference type="HOGENOM" id="CLU_086034_1_0_6"/>
<dbReference type="OrthoDB" id="9816005at2"/>
<dbReference type="Proteomes" id="UP000000639">
    <property type="component" value="Chromosome"/>
</dbReference>
<dbReference type="GO" id="GO:0033281">
    <property type="term" value="C:TAT protein transport complex"/>
    <property type="evidence" value="ECO:0007669"/>
    <property type="project" value="UniProtKB-UniRule"/>
</dbReference>
<dbReference type="GO" id="GO:0008320">
    <property type="term" value="F:protein transmembrane transporter activity"/>
    <property type="evidence" value="ECO:0007669"/>
    <property type="project" value="UniProtKB-UniRule"/>
</dbReference>
<dbReference type="GO" id="GO:0043953">
    <property type="term" value="P:protein transport by the Tat complex"/>
    <property type="evidence" value="ECO:0007669"/>
    <property type="project" value="UniProtKB-UniRule"/>
</dbReference>
<dbReference type="Gene3D" id="1.20.5.3310">
    <property type="match status" value="1"/>
</dbReference>
<dbReference type="HAMAP" id="MF_00237">
    <property type="entry name" value="TatB"/>
    <property type="match status" value="1"/>
</dbReference>
<dbReference type="InterPro" id="IPR003369">
    <property type="entry name" value="TatA/B/E"/>
</dbReference>
<dbReference type="InterPro" id="IPR018448">
    <property type="entry name" value="TatB"/>
</dbReference>
<dbReference type="NCBIfam" id="TIGR01410">
    <property type="entry name" value="tatB"/>
    <property type="match status" value="1"/>
</dbReference>
<dbReference type="PANTHER" id="PTHR33162">
    <property type="entry name" value="SEC-INDEPENDENT PROTEIN TRANSLOCASE PROTEIN TATA, CHLOROPLASTIC"/>
    <property type="match status" value="1"/>
</dbReference>
<dbReference type="PANTHER" id="PTHR33162:SF1">
    <property type="entry name" value="SEC-INDEPENDENT PROTEIN TRANSLOCASE PROTEIN TATA, CHLOROPLASTIC"/>
    <property type="match status" value="1"/>
</dbReference>
<dbReference type="Pfam" id="PF02416">
    <property type="entry name" value="TatA_B_E"/>
    <property type="match status" value="1"/>
</dbReference>
<dbReference type="PRINTS" id="PR01506">
    <property type="entry name" value="TATBPROTEIN"/>
</dbReference>
<accession>A1SRS0</accession>
<reference key="1">
    <citation type="journal article" date="2008" name="BMC Genomics">
        <title>Genomics of an extreme psychrophile, Psychromonas ingrahamii.</title>
        <authorList>
            <person name="Riley M."/>
            <person name="Staley J.T."/>
            <person name="Danchin A."/>
            <person name="Wang T.Z."/>
            <person name="Brettin T.S."/>
            <person name="Hauser L.J."/>
            <person name="Land M.L."/>
            <person name="Thompson L.S."/>
        </authorList>
    </citation>
    <scope>NUCLEOTIDE SEQUENCE [LARGE SCALE GENOMIC DNA]</scope>
    <source>
        <strain>DSM 17664 / CCUG 51855 / 37</strain>
    </source>
</reference>
<protein>
    <recommendedName>
        <fullName evidence="1">Sec-independent protein translocase protein TatB</fullName>
    </recommendedName>
</protein>
<gene>
    <name evidence="1" type="primary">tatB</name>
    <name type="ordered locus">Ping_0319</name>
</gene>
<feature type="chain" id="PRO_0000301215" description="Sec-independent protein translocase protein TatB">
    <location>
        <begin position="1"/>
        <end position="136"/>
    </location>
</feature>
<feature type="transmembrane region" description="Helical" evidence="1">
    <location>
        <begin position="1"/>
        <end position="21"/>
    </location>
</feature>
<feature type="region of interest" description="Disordered" evidence="2">
    <location>
        <begin position="66"/>
        <end position="136"/>
    </location>
</feature>
<feature type="compositionally biased region" description="Basic and acidic residues" evidence="2">
    <location>
        <begin position="77"/>
        <end position="89"/>
    </location>
</feature>
<feature type="compositionally biased region" description="Basic and acidic residues" evidence="2">
    <location>
        <begin position="96"/>
        <end position="107"/>
    </location>
</feature>
<feature type="compositionally biased region" description="Polar residues" evidence="2">
    <location>
        <begin position="108"/>
        <end position="130"/>
    </location>
</feature>